<dbReference type="EC" id="3.1.27.-"/>
<dbReference type="EMBL" id="AF037089">
    <property type="protein sequence ID" value="AAB94751.1"/>
    <property type="molecule type" value="Genomic_DNA"/>
</dbReference>
<dbReference type="SMR" id="O46533"/>
<dbReference type="FunCoup" id="O46533">
    <property type="interactions" value="40"/>
</dbReference>
<dbReference type="STRING" id="9544.ENSMMUP00000002223"/>
<dbReference type="GlyCosmos" id="O46533">
    <property type="glycosylation" value="2 sites, No reported glycans"/>
</dbReference>
<dbReference type="PaxDb" id="9544-ENSMMUP00000002223"/>
<dbReference type="eggNOG" id="ENOG502TDZ3">
    <property type="taxonomic scope" value="Eukaryota"/>
</dbReference>
<dbReference type="InParanoid" id="O46533"/>
<dbReference type="Proteomes" id="UP000006718">
    <property type="component" value="Unassembled WGS sequence"/>
</dbReference>
<dbReference type="GO" id="GO:0005615">
    <property type="term" value="C:extracellular space"/>
    <property type="evidence" value="ECO:0000318"/>
    <property type="project" value="GO_Central"/>
</dbReference>
<dbReference type="GO" id="GO:0005764">
    <property type="term" value="C:lysosome"/>
    <property type="evidence" value="ECO:0007669"/>
    <property type="project" value="UniProtKB-SubCell"/>
</dbReference>
<dbReference type="GO" id="GO:0004519">
    <property type="term" value="F:endonuclease activity"/>
    <property type="evidence" value="ECO:0007669"/>
    <property type="project" value="UniProtKB-KW"/>
</dbReference>
<dbReference type="GO" id="GO:0003676">
    <property type="term" value="F:nucleic acid binding"/>
    <property type="evidence" value="ECO:0007669"/>
    <property type="project" value="InterPro"/>
</dbReference>
<dbReference type="GO" id="GO:0004540">
    <property type="term" value="F:RNA nuclease activity"/>
    <property type="evidence" value="ECO:0000318"/>
    <property type="project" value="GO_Central"/>
</dbReference>
<dbReference type="GO" id="GO:0019731">
    <property type="term" value="P:antibacterial humoral response"/>
    <property type="evidence" value="ECO:0000318"/>
    <property type="project" value="GO_Central"/>
</dbReference>
<dbReference type="GO" id="GO:0061844">
    <property type="term" value="P:antimicrobial humoral immune response mediated by antimicrobial peptide"/>
    <property type="evidence" value="ECO:0000318"/>
    <property type="project" value="GO_Central"/>
</dbReference>
<dbReference type="GO" id="GO:0050829">
    <property type="term" value="P:defense response to Gram-negative bacterium"/>
    <property type="evidence" value="ECO:0000318"/>
    <property type="project" value="GO_Central"/>
</dbReference>
<dbReference type="GO" id="GO:0050830">
    <property type="term" value="P:defense response to Gram-positive bacterium"/>
    <property type="evidence" value="ECO:0000318"/>
    <property type="project" value="GO_Central"/>
</dbReference>
<dbReference type="GO" id="GO:0045087">
    <property type="term" value="P:innate immune response"/>
    <property type="evidence" value="ECO:0000318"/>
    <property type="project" value="GO_Central"/>
</dbReference>
<dbReference type="CDD" id="cd06265">
    <property type="entry name" value="RNase_A_canonical"/>
    <property type="match status" value="1"/>
</dbReference>
<dbReference type="FunFam" id="3.10.130.10:FF:000001">
    <property type="entry name" value="Ribonuclease pancreatic"/>
    <property type="match status" value="1"/>
</dbReference>
<dbReference type="Gene3D" id="3.10.130.10">
    <property type="entry name" value="Ribonuclease A-like domain"/>
    <property type="match status" value="1"/>
</dbReference>
<dbReference type="InterPro" id="IPR001427">
    <property type="entry name" value="RNaseA"/>
</dbReference>
<dbReference type="InterPro" id="IPR036816">
    <property type="entry name" value="RNaseA-like_dom_sf"/>
</dbReference>
<dbReference type="InterPro" id="IPR023411">
    <property type="entry name" value="RNaseA_AS"/>
</dbReference>
<dbReference type="InterPro" id="IPR023412">
    <property type="entry name" value="RNaseA_domain"/>
</dbReference>
<dbReference type="PANTHER" id="PTHR11437">
    <property type="entry name" value="RIBONUCLEASE"/>
    <property type="match status" value="1"/>
</dbReference>
<dbReference type="PANTHER" id="PTHR11437:SF4">
    <property type="entry name" value="RIBONUCLEASE K6"/>
    <property type="match status" value="1"/>
</dbReference>
<dbReference type="Pfam" id="PF00074">
    <property type="entry name" value="RnaseA"/>
    <property type="match status" value="1"/>
</dbReference>
<dbReference type="PRINTS" id="PR00794">
    <property type="entry name" value="RIBONUCLEASE"/>
</dbReference>
<dbReference type="SMART" id="SM00092">
    <property type="entry name" value="RNAse_Pc"/>
    <property type="match status" value="1"/>
</dbReference>
<dbReference type="SUPFAM" id="SSF54076">
    <property type="entry name" value="RNase A-like"/>
    <property type="match status" value="1"/>
</dbReference>
<dbReference type="PROSITE" id="PS00127">
    <property type="entry name" value="RNASE_PANCREATIC"/>
    <property type="match status" value="1"/>
</dbReference>
<accession>O46533</accession>
<comment type="function">
    <text evidence="3">Ribonuclease which shows a preference for the pyrimidines uridine and cytosine. Has potent antibacterial activity against a range of Gram-positive and Gram-negative bacteria, including P.aeruginosa, A.baumanii, M.luteus, S.aureus, E.faecalis, E.faecium, S.saprophyticus and E.coli. Causes loss of bacterial membrane integrity, and also promotes agglutination of Gram-negative bacteria. Probably contributes to urinary tract sterility. Bactericidal activity is independent of RNase activity.</text>
</comment>
<comment type="subunit">
    <text evidence="3">Interacts (via N-terminus) with bacterial lipopolysaccharide (LPS).</text>
</comment>
<comment type="subcellular location">
    <subcellularLocation>
        <location evidence="3">Secreted</location>
    </subcellularLocation>
    <subcellularLocation>
        <location evidence="3">Lysosome</location>
    </subcellularLocation>
    <subcellularLocation>
        <location evidence="3">Cytoplasmic granule</location>
    </subcellularLocation>
</comment>
<comment type="similarity">
    <text evidence="6">Belongs to the pancreatic ribonuclease family.</text>
</comment>
<keyword id="KW-0044">Antibiotic</keyword>
<keyword id="KW-0929">Antimicrobial</keyword>
<keyword id="KW-1015">Disulfide bond</keyword>
<keyword id="KW-0255">Endonuclease</keyword>
<keyword id="KW-0325">Glycoprotein</keyword>
<keyword id="KW-0378">Hydrolase</keyword>
<keyword id="KW-0458">Lysosome</keyword>
<keyword id="KW-0540">Nuclease</keyword>
<keyword id="KW-1185">Reference proteome</keyword>
<keyword id="KW-0964">Secreted</keyword>
<keyword id="KW-0732">Signal</keyword>
<reference key="1">
    <citation type="journal article" date="1998" name="Genome Res.">
        <title>Ribonuclease k6: chromosomal mapping and divergent rates of evolution within the RNase A gene superfamily.</title>
        <authorList>
            <person name="Deming M.S."/>
            <person name="Dyer K.D."/>
            <person name="Bankier A.T."/>
            <person name="Piper M.B."/>
            <person name="Dear P.H."/>
            <person name="Rosenberg H.F."/>
        </authorList>
    </citation>
    <scope>NUCLEOTIDE SEQUENCE [GENOMIC DNA]</scope>
    <source>
        <tissue>Kidney</tissue>
    </source>
</reference>
<protein>
    <recommendedName>
        <fullName>Ribonuclease K6</fullName>
        <shortName>RNase K6</shortName>
        <ecNumber>3.1.27.-</ecNumber>
    </recommendedName>
</protein>
<evidence type="ECO:0000250" key="1"/>
<evidence type="ECO:0000250" key="2">
    <source>
        <dbReference type="UniProtKB" id="Q64438"/>
    </source>
</evidence>
<evidence type="ECO:0000250" key="3">
    <source>
        <dbReference type="UniProtKB" id="Q93091"/>
    </source>
</evidence>
<evidence type="ECO:0000250" key="4">
    <source>
        <dbReference type="UniProtKB" id="Q9H1E1"/>
    </source>
</evidence>
<evidence type="ECO:0000255" key="5"/>
<evidence type="ECO:0000305" key="6"/>
<proteinExistence type="inferred from homology"/>
<sequence length="150" mass="17177">MVLCFPLLLLLLVLWGPVCLLHAWPKHLTRAHWFEIQHIQPSPLQCNRAMSGINNYTQHCKHQNTFLHDSFQNVAAVCDLLSIICKNRQHNCHQSSKPVNMTDCRLTSGKYPQCRYSAAAQYKFFIVACDPPQKGDPPYKLVPVHLDSIL</sequence>
<feature type="signal peptide" evidence="1">
    <location>
        <begin position="1"/>
        <end position="23"/>
    </location>
</feature>
<feature type="chain" id="PRO_0000030893" description="Ribonuclease K6">
    <location>
        <begin position="24"/>
        <end position="150"/>
    </location>
</feature>
<feature type="active site" description="Proton acceptor" evidence="2">
    <location>
        <position position="38"/>
    </location>
</feature>
<feature type="active site" description="Proton donor" evidence="2">
    <location>
        <position position="145"/>
    </location>
</feature>
<feature type="binding site" evidence="1">
    <location>
        <begin position="61"/>
        <end position="65"/>
    </location>
    <ligand>
        <name>substrate</name>
    </ligand>
</feature>
<feature type="binding site" evidence="1">
    <location>
        <position position="86"/>
    </location>
    <ligand>
        <name>substrate</name>
    </ligand>
</feature>
<feature type="binding site" evidence="1">
    <location>
        <position position="105"/>
    </location>
    <ligand>
        <name>substrate</name>
    </ligand>
</feature>
<feature type="site" description="Facilitates cleavage of polynucleotide substrates" evidence="3">
    <location>
        <position position="59"/>
    </location>
</feature>
<feature type="site" description="Critical for catalytic activity" evidence="4">
    <location>
        <position position="61"/>
    </location>
</feature>
<feature type="glycosylation site" description="N-linked (GlcNAc...) asparagine" evidence="5">
    <location>
        <position position="55"/>
    </location>
</feature>
<feature type="glycosylation site" description="N-linked (GlcNAc...) asparagine" evidence="5">
    <location>
        <position position="100"/>
    </location>
</feature>
<feature type="disulfide bond" evidence="3">
    <location>
        <begin position="46"/>
        <end position="104"/>
    </location>
</feature>
<feature type="disulfide bond" evidence="3">
    <location>
        <begin position="60"/>
        <end position="114"/>
    </location>
</feature>
<feature type="disulfide bond" evidence="3">
    <location>
        <begin position="78"/>
        <end position="129"/>
    </location>
</feature>
<feature type="disulfide bond" evidence="3">
    <location>
        <begin position="85"/>
        <end position="92"/>
    </location>
</feature>
<gene>
    <name type="primary">RNASE6</name>
</gene>
<name>RNAS6_MACMU</name>
<organism>
    <name type="scientific">Macaca mulatta</name>
    <name type="common">Rhesus macaque</name>
    <dbReference type="NCBI Taxonomy" id="9544"/>
    <lineage>
        <taxon>Eukaryota</taxon>
        <taxon>Metazoa</taxon>
        <taxon>Chordata</taxon>
        <taxon>Craniata</taxon>
        <taxon>Vertebrata</taxon>
        <taxon>Euteleostomi</taxon>
        <taxon>Mammalia</taxon>
        <taxon>Eutheria</taxon>
        <taxon>Euarchontoglires</taxon>
        <taxon>Primates</taxon>
        <taxon>Haplorrhini</taxon>
        <taxon>Catarrhini</taxon>
        <taxon>Cercopithecidae</taxon>
        <taxon>Cercopithecinae</taxon>
        <taxon>Macaca</taxon>
    </lineage>
</organism>